<sequence length="283" mass="30676">MGNIQYLAAIPSPPQGVWHLGPVPIRAYALCIIVGIFVAMKIGSVRYQQRGGNPDLVIDAGIVAVIAGIIGGRLYHVLTDNQKYFCADCNPVDVFKITNGGLGIWGAVALGTIAVYFYLKKKGVAFALFADAVAPGIILAQAIGRLGNWFNQELYGRETSVPWALEIYYRVDASGKFAPLTGHSTGEVMATVHPTFLYEMIWNLVIFAVLLWADKKFQLGHGRVFALYVAGYTAGRFVVENMRADDATMVFGLRINVIVSVVVCAIAVGALFALRRGRESISS</sequence>
<name>LGT_CORDI</name>
<gene>
    <name evidence="1" type="primary">lgt</name>
    <name type="ordered locus">DIP1554</name>
</gene>
<accession>P60969</accession>
<keyword id="KW-1003">Cell membrane</keyword>
<keyword id="KW-0472">Membrane</keyword>
<keyword id="KW-1185">Reference proteome</keyword>
<keyword id="KW-0808">Transferase</keyword>
<keyword id="KW-0812">Transmembrane</keyword>
<keyword id="KW-1133">Transmembrane helix</keyword>
<evidence type="ECO:0000255" key="1">
    <source>
        <dbReference type="HAMAP-Rule" id="MF_01147"/>
    </source>
</evidence>
<reference key="1">
    <citation type="journal article" date="2003" name="Nucleic Acids Res.">
        <title>The complete genome sequence and analysis of Corynebacterium diphtheriae NCTC13129.</title>
        <authorList>
            <person name="Cerdeno-Tarraga A.-M."/>
            <person name="Efstratiou A."/>
            <person name="Dover L.G."/>
            <person name="Holden M.T.G."/>
            <person name="Pallen M.J."/>
            <person name="Bentley S.D."/>
            <person name="Besra G.S."/>
            <person name="Churcher C.M."/>
            <person name="James K.D."/>
            <person name="De Zoysa A."/>
            <person name="Chillingworth T."/>
            <person name="Cronin A."/>
            <person name="Dowd L."/>
            <person name="Feltwell T."/>
            <person name="Hamlin N."/>
            <person name="Holroyd S."/>
            <person name="Jagels K."/>
            <person name="Moule S."/>
            <person name="Quail M.A."/>
            <person name="Rabbinowitsch E."/>
            <person name="Rutherford K.M."/>
            <person name="Thomson N.R."/>
            <person name="Unwin L."/>
            <person name="Whitehead S."/>
            <person name="Barrell B.G."/>
            <person name="Parkhill J."/>
        </authorList>
    </citation>
    <scope>NUCLEOTIDE SEQUENCE [LARGE SCALE GENOMIC DNA]</scope>
    <source>
        <strain>ATCC 700971 / NCTC 13129 / Biotype gravis</strain>
    </source>
</reference>
<comment type="function">
    <text evidence="1">Catalyzes the transfer of the diacylglyceryl group from phosphatidylglycerol to the sulfhydryl group of the N-terminal cysteine of a prolipoprotein, the first step in the formation of mature lipoproteins.</text>
</comment>
<comment type="catalytic activity">
    <reaction evidence="1">
        <text>L-cysteinyl-[prolipoprotein] + a 1,2-diacyl-sn-glycero-3-phospho-(1'-sn-glycerol) = an S-1,2-diacyl-sn-glyceryl-L-cysteinyl-[prolipoprotein] + sn-glycerol 1-phosphate + H(+)</text>
        <dbReference type="Rhea" id="RHEA:56712"/>
        <dbReference type="Rhea" id="RHEA-COMP:14679"/>
        <dbReference type="Rhea" id="RHEA-COMP:14680"/>
        <dbReference type="ChEBI" id="CHEBI:15378"/>
        <dbReference type="ChEBI" id="CHEBI:29950"/>
        <dbReference type="ChEBI" id="CHEBI:57685"/>
        <dbReference type="ChEBI" id="CHEBI:64716"/>
        <dbReference type="ChEBI" id="CHEBI:140658"/>
        <dbReference type="EC" id="2.5.1.145"/>
    </reaction>
</comment>
<comment type="pathway">
    <text evidence="1">Protein modification; lipoprotein biosynthesis (diacylglyceryl transfer).</text>
</comment>
<comment type="subcellular location">
    <subcellularLocation>
        <location evidence="1">Cell membrane</location>
        <topology evidence="1">Multi-pass membrane protein</topology>
    </subcellularLocation>
</comment>
<comment type="similarity">
    <text evidence="1">Belongs to the Lgt family.</text>
</comment>
<feature type="chain" id="PRO_0000172589" description="Phosphatidylglycerol--prolipoprotein diacylglyceryl transferase">
    <location>
        <begin position="1"/>
        <end position="283"/>
    </location>
</feature>
<feature type="transmembrane region" description="Helical" evidence="1">
    <location>
        <begin position="20"/>
        <end position="40"/>
    </location>
</feature>
<feature type="transmembrane region" description="Helical" evidence="1">
    <location>
        <begin position="51"/>
        <end position="71"/>
    </location>
</feature>
<feature type="transmembrane region" description="Helical" evidence="1">
    <location>
        <begin position="97"/>
        <end position="117"/>
    </location>
</feature>
<feature type="transmembrane region" description="Helical" evidence="1">
    <location>
        <begin position="123"/>
        <end position="143"/>
    </location>
</feature>
<feature type="transmembrane region" description="Helical" evidence="1">
    <location>
        <begin position="192"/>
        <end position="212"/>
    </location>
</feature>
<feature type="transmembrane region" description="Helical" evidence="1">
    <location>
        <begin position="255"/>
        <end position="275"/>
    </location>
</feature>
<feature type="binding site" evidence="1">
    <location>
        <position position="145"/>
    </location>
    <ligand>
        <name>a 1,2-diacyl-sn-glycero-3-phospho-(1'-sn-glycerol)</name>
        <dbReference type="ChEBI" id="CHEBI:64716"/>
    </ligand>
</feature>
<proteinExistence type="inferred from homology"/>
<protein>
    <recommendedName>
        <fullName evidence="1">Phosphatidylglycerol--prolipoprotein diacylglyceryl transferase</fullName>
        <ecNumber evidence="1">2.5.1.145</ecNumber>
    </recommendedName>
</protein>
<dbReference type="EC" id="2.5.1.145" evidence="1"/>
<dbReference type="EMBL" id="BX248358">
    <property type="protein sequence ID" value="CAE50079.1"/>
    <property type="molecule type" value="Genomic_DNA"/>
</dbReference>
<dbReference type="RefSeq" id="WP_010935149.1">
    <property type="nucleotide sequence ID" value="NC_002935.2"/>
</dbReference>
<dbReference type="SMR" id="P60969"/>
<dbReference type="STRING" id="257309.DIP1554"/>
<dbReference type="KEGG" id="cdi:DIP1554"/>
<dbReference type="HOGENOM" id="CLU_013386_2_0_11"/>
<dbReference type="UniPathway" id="UPA00664"/>
<dbReference type="Proteomes" id="UP000002198">
    <property type="component" value="Chromosome"/>
</dbReference>
<dbReference type="GO" id="GO:0005886">
    <property type="term" value="C:plasma membrane"/>
    <property type="evidence" value="ECO:0007669"/>
    <property type="project" value="UniProtKB-SubCell"/>
</dbReference>
<dbReference type="GO" id="GO:0008961">
    <property type="term" value="F:phosphatidylglycerol-prolipoprotein diacylglyceryl transferase activity"/>
    <property type="evidence" value="ECO:0007669"/>
    <property type="project" value="UniProtKB-UniRule"/>
</dbReference>
<dbReference type="GO" id="GO:0042158">
    <property type="term" value="P:lipoprotein biosynthetic process"/>
    <property type="evidence" value="ECO:0007669"/>
    <property type="project" value="UniProtKB-UniRule"/>
</dbReference>
<dbReference type="HAMAP" id="MF_01147">
    <property type="entry name" value="Lgt"/>
    <property type="match status" value="1"/>
</dbReference>
<dbReference type="InterPro" id="IPR001640">
    <property type="entry name" value="Lgt"/>
</dbReference>
<dbReference type="NCBIfam" id="TIGR00544">
    <property type="entry name" value="lgt"/>
    <property type="match status" value="1"/>
</dbReference>
<dbReference type="PANTHER" id="PTHR30589:SF0">
    <property type="entry name" value="PHOSPHATIDYLGLYCEROL--PROLIPOPROTEIN DIACYLGLYCERYL TRANSFERASE"/>
    <property type="match status" value="1"/>
</dbReference>
<dbReference type="PANTHER" id="PTHR30589">
    <property type="entry name" value="PROLIPOPROTEIN DIACYLGLYCERYL TRANSFERASE"/>
    <property type="match status" value="1"/>
</dbReference>
<dbReference type="Pfam" id="PF01790">
    <property type="entry name" value="LGT"/>
    <property type="match status" value="1"/>
</dbReference>
<dbReference type="PROSITE" id="PS01311">
    <property type="entry name" value="LGT"/>
    <property type="match status" value="1"/>
</dbReference>
<organism>
    <name type="scientific">Corynebacterium diphtheriae (strain ATCC 700971 / NCTC 13129 / Biotype gravis)</name>
    <dbReference type="NCBI Taxonomy" id="257309"/>
    <lineage>
        <taxon>Bacteria</taxon>
        <taxon>Bacillati</taxon>
        <taxon>Actinomycetota</taxon>
        <taxon>Actinomycetes</taxon>
        <taxon>Mycobacteriales</taxon>
        <taxon>Corynebacteriaceae</taxon>
        <taxon>Corynebacterium</taxon>
    </lineage>
</organism>